<proteinExistence type="evidence at protein level"/>
<organism>
    <name type="scientific">Arabidopsis thaliana</name>
    <name type="common">Mouse-ear cress</name>
    <dbReference type="NCBI Taxonomy" id="3702"/>
    <lineage>
        <taxon>Eukaryota</taxon>
        <taxon>Viridiplantae</taxon>
        <taxon>Streptophyta</taxon>
        <taxon>Embryophyta</taxon>
        <taxon>Tracheophyta</taxon>
        <taxon>Spermatophyta</taxon>
        <taxon>Magnoliopsida</taxon>
        <taxon>eudicotyledons</taxon>
        <taxon>Gunneridae</taxon>
        <taxon>Pentapetalae</taxon>
        <taxon>rosids</taxon>
        <taxon>malvids</taxon>
        <taxon>Brassicales</taxon>
        <taxon>Brassicaceae</taxon>
        <taxon>Camelineae</taxon>
        <taxon>Arabidopsis</taxon>
    </lineage>
</organism>
<name>EM506_ARATH</name>
<keyword id="KW-0002">3D-structure</keyword>
<keyword id="KW-0040">ANK repeat</keyword>
<keyword id="KW-0150">Chloroplast</keyword>
<keyword id="KW-0934">Plastid</keyword>
<keyword id="KW-1185">Reference proteome</keyword>
<keyword id="KW-0677">Repeat</keyword>
<keyword id="KW-0809">Transit peptide</keyword>
<reference key="1">
    <citation type="journal article" date="1999" name="Plant J.">
        <title>The EMB 506 gene encodes a novel ankyrin repeat containing protein that is essential for the normal development of Arabidopsis embryos.</title>
        <authorList>
            <person name="Albert S."/>
            <person name="Despres B."/>
            <person name="Guilleminot J."/>
            <person name="Bechtold N."/>
            <person name="Pelletier G."/>
            <person name="Delseny M."/>
            <person name="Devic M."/>
        </authorList>
    </citation>
    <scope>NUCLEOTIDE SEQUENCE [MRNA]</scope>
</reference>
<reference key="2">
    <citation type="journal article" date="1998" name="DNA Res.">
        <title>Structural analysis of Arabidopsis thaliana chromosome 5. V. Sequence features of the regions of 1,381,565 bp covered by twenty one physically assigned P1 and TAC clones.</title>
        <authorList>
            <person name="Kaneko T."/>
            <person name="Kotani H."/>
            <person name="Nakamura Y."/>
            <person name="Sato S."/>
            <person name="Asamizu E."/>
            <person name="Miyajima N."/>
            <person name="Tabata S."/>
        </authorList>
    </citation>
    <scope>NUCLEOTIDE SEQUENCE [LARGE SCALE GENOMIC DNA]</scope>
    <source>
        <strain>cv. Columbia</strain>
    </source>
</reference>
<reference key="3">
    <citation type="journal article" date="2017" name="Plant J.">
        <title>Araport11: a complete reannotation of the Arabidopsis thaliana reference genome.</title>
        <authorList>
            <person name="Cheng C.Y."/>
            <person name="Krishnakumar V."/>
            <person name="Chan A.P."/>
            <person name="Thibaud-Nissen F."/>
            <person name="Schobel S."/>
            <person name="Town C.D."/>
        </authorList>
    </citation>
    <scope>GENOME REANNOTATION</scope>
    <source>
        <strain>cv. Columbia</strain>
    </source>
</reference>
<reference key="4">
    <citation type="journal article" date="2003" name="Science">
        <title>Empirical analysis of transcriptional activity in the Arabidopsis genome.</title>
        <authorList>
            <person name="Yamada K."/>
            <person name="Lim J."/>
            <person name="Dale J.M."/>
            <person name="Chen H."/>
            <person name="Shinn P."/>
            <person name="Palm C.J."/>
            <person name="Southwick A.M."/>
            <person name="Wu H.C."/>
            <person name="Kim C.J."/>
            <person name="Nguyen M."/>
            <person name="Pham P.K."/>
            <person name="Cheuk R.F."/>
            <person name="Karlin-Newmann G."/>
            <person name="Liu S.X."/>
            <person name="Lam B."/>
            <person name="Sakano H."/>
            <person name="Wu T."/>
            <person name="Yu G."/>
            <person name="Miranda M."/>
            <person name="Quach H.L."/>
            <person name="Tripp M."/>
            <person name="Chang C.H."/>
            <person name="Lee J.M."/>
            <person name="Toriumi M.J."/>
            <person name="Chan M.M."/>
            <person name="Tang C.C."/>
            <person name="Onodera C.S."/>
            <person name="Deng J.M."/>
            <person name="Akiyama K."/>
            <person name="Ansari Y."/>
            <person name="Arakawa T."/>
            <person name="Banh J."/>
            <person name="Banno F."/>
            <person name="Bowser L."/>
            <person name="Brooks S.Y."/>
            <person name="Carninci P."/>
            <person name="Chao Q."/>
            <person name="Choy N."/>
            <person name="Enju A."/>
            <person name="Goldsmith A.D."/>
            <person name="Gurjal M."/>
            <person name="Hansen N.F."/>
            <person name="Hayashizaki Y."/>
            <person name="Johnson-Hopson C."/>
            <person name="Hsuan V.W."/>
            <person name="Iida K."/>
            <person name="Karnes M."/>
            <person name="Khan S."/>
            <person name="Koesema E."/>
            <person name="Ishida J."/>
            <person name="Jiang P.X."/>
            <person name="Jones T."/>
            <person name="Kawai J."/>
            <person name="Kamiya A."/>
            <person name="Meyers C."/>
            <person name="Nakajima M."/>
            <person name="Narusaka M."/>
            <person name="Seki M."/>
            <person name="Sakurai T."/>
            <person name="Satou M."/>
            <person name="Tamse R."/>
            <person name="Vaysberg M."/>
            <person name="Wallender E.K."/>
            <person name="Wong C."/>
            <person name="Yamamura Y."/>
            <person name="Yuan S."/>
            <person name="Shinozaki K."/>
            <person name="Davis R.W."/>
            <person name="Theologis A."/>
            <person name="Ecker J.R."/>
        </authorList>
    </citation>
    <scope>NUCLEOTIDE SEQUENCE [LARGE SCALE MRNA]</scope>
    <source>
        <strain>cv. Columbia</strain>
    </source>
</reference>
<reference key="5">
    <citation type="journal article" date="2001" name="Plant J.">
        <title>Partial complementation of embryo defective mutations: a general strategy to elucidate gene function.</title>
        <authorList>
            <person name="Despres B."/>
            <person name="Delseny M."/>
            <person name="Devic M."/>
        </authorList>
    </citation>
    <scope>FUNCTION</scope>
    <scope>DEVELOPMENTAL STAGE</scope>
    <scope>TISSUE SPECIFICITY</scope>
    <scope>SUBCELLULAR LOCATION</scope>
</reference>
<reference key="6">
    <citation type="journal article" date="2006" name="Plant Mol. Biol.">
        <title>Uncovering the post-embryonic role of embryo essential genes in Arabidopsis using the controlled induction of visibly marked genetic mosaics: EMB506, an illustration.</title>
        <authorList>
            <person name="Latvala-Kilby S.M.H."/>
            <person name="Kilby N.J."/>
        </authorList>
    </citation>
    <scope>FUNCTION</scope>
</reference>
<reference key="7">
    <citation type="journal article" date="2006" name="Plant J.">
        <title>AKRP and EMB506 are two ankyrin repeat proteins essential for plastid differentiation and plant development in Arabidopsis.</title>
        <authorList>
            <person name="Garcion C."/>
            <person name="Guilleminot J."/>
            <person name="Kroj T."/>
            <person name="Parcy F."/>
            <person name="Giraudat J."/>
            <person name="Devic M."/>
        </authorList>
    </citation>
    <scope>INTERACTION WITH AKR</scope>
    <scope>TISSUE SPECIFICITY</scope>
    <scope>SUBCELLULAR LOCATION</scope>
</reference>
<gene>
    <name type="primary">EMB506</name>
    <name type="ordered locus">At5g40160</name>
    <name type="ORF">MSN9.60</name>
</gene>
<dbReference type="EMBL" id="AF026167">
    <property type="protein sequence ID" value="AAD55746.1"/>
    <property type="molecule type" value="mRNA"/>
</dbReference>
<dbReference type="EMBL" id="AB010699">
    <property type="protein sequence ID" value="BAB10897.1"/>
    <property type="molecule type" value="Genomic_DNA"/>
</dbReference>
<dbReference type="EMBL" id="CP002688">
    <property type="protein sequence ID" value="AED94515.1"/>
    <property type="molecule type" value="Genomic_DNA"/>
</dbReference>
<dbReference type="EMBL" id="AY063792">
    <property type="protein sequence ID" value="AAL36099.1"/>
    <property type="molecule type" value="mRNA"/>
</dbReference>
<dbReference type="EMBL" id="AY117280">
    <property type="protein sequence ID" value="AAM51355.1"/>
    <property type="molecule type" value="mRNA"/>
</dbReference>
<dbReference type="RefSeq" id="NP_198832.1">
    <property type="nucleotide sequence ID" value="NM_123380.3"/>
</dbReference>
<dbReference type="PDB" id="6JD6">
    <property type="method" value="X-ray"/>
    <property type="resolution" value="2.20 A"/>
    <property type="chains" value="A=41-315"/>
</dbReference>
<dbReference type="PDBsum" id="6JD6"/>
<dbReference type="SMR" id="Q9SQK3"/>
<dbReference type="BioGRID" id="19265">
    <property type="interactions" value="5"/>
</dbReference>
<dbReference type="FunCoup" id="Q9SQK3">
    <property type="interactions" value="1171"/>
</dbReference>
<dbReference type="IntAct" id="Q9SQK3">
    <property type="interactions" value="4"/>
</dbReference>
<dbReference type="STRING" id="3702.Q9SQK3"/>
<dbReference type="PaxDb" id="3702-AT5G40160.1"/>
<dbReference type="ProteomicsDB" id="222322"/>
<dbReference type="EnsemblPlants" id="AT5G40160.1">
    <property type="protein sequence ID" value="AT5G40160.1"/>
    <property type="gene ID" value="AT5G40160"/>
</dbReference>
<dbReference type="GeneID" id="834014"/>
<dbReference type="Gramene" id="AT5G40160.1">
    <property type="protein sequence ID" value="AT5G40160.1"/>
    <property type="gene ID" value="AT5G40160"/>
</dbReference>
<dbReference type="KEGG" id="ath:AT5G40160"/>
<dbReference type="Araport" id="AT5G40160"/>
<dbReference type="TAIR" id="AT5G40160">
    <property type="gene designation" value="EMB506"/>
</dbReference>
<dbReference type="eggNOG" id="KOG0504">
    <property type="taxonomic scope" value="Eukaryota"/>
</dbReference>
<dbReference type="HOGENOM" id="CLU_069938_1_0_1"/>
<dbReference type="InParanoid" id="Q9SQK3"/>
<dbReference type="OMA" id="CPKSTHL"/>
<dbReference type="OrthoDB" id="1577640at2759"/>
<dbReference type="PhylomeDB" id="Q9SQK3"/>
<dbReference type="CD-CODE" id="4A9B7D75">
    <property type="entry name" value="Synthetic Condensate 000339"/>
</dbReference>
<dbReference type="PRO" id="PR:Q9SQK3"/>
<dbReference type="Proteomes" id="UP000006548">
    <property type="component" value="Chromosome 5"/>
</dbReference>
<dbReference type="ExpressionAtlas" id="Q9SQK3">
    <property type="expression patterns" value="baseline and differential"/>
</dbReference>
<dbReference type="GO" id="GO:0009507">
    <property type="term" value="C:chloroplast"/>
    <property type="evidence" value="ECO:0007669"/>
    <property type="project" value="UniProtKB-SubCell"/>
</dbReference>
<dbReference type="GO" id="GO:0140693">
    <property type="term" value="F:molecular condensate scaffold activity"/>
    <property type="evidence" value="ECO:0000314"/>
    <property type="project" value="DisProt"/>
</dbReference>
<dbReference type="DisProt" id="DP02919"/>
<dbReference type="Gene3D" id="1.25.40.20">
    <property type="entry name" value="Ankyrin repeat-containing domain"/>
    <property type="match status" value="2"/>
</dbReference>
<dbReference type="InterPro" id="IPR002110">
    <property type="entry name" value="Ankyrin_rpt"/>
</dbReference>
<dbReference type="InterPro" id="IPR036770">
    <property type="entry name" value="Ankyrin_rpt-contain_sf"/>
</dbReference>
<dbReference type="PANTHER" id="PTHR24203:SF76">
    <property type="entry name" value="ANKYRIN REPEAT DOMAIN-CONTAINING PROTEIN EMB506, CHLOROPLASTIC"/>
    <property type="match status" value="1"/>
</dbReference>
<dbReference type="PANTHER" id="PTHR24203">
    <property type="entry name" value="ANKYRIN REPEAT FAMILY PROTEIN"/>
    <property type="match status" value="1"/>
</dbReference>
<dbReference type="Pfam" id="PF12796">
    <property type="entry name" value="Ank_2"/>
    <property type="match status" value="1"/>
</dbReference>
<dbReference type="SMART" id="SM00248">
    <property type="entry name" value="ANK"/>
    <property type="match status" value="4"/>
</dbReference>
<dbReference type="SUPFAM" id="SSF48403">
    <property type="entry name" value="Ankyrin repeat"/>
    <property type="match status" value="1"/>
</dbReference>
<dbReference type="PROSITE" id="PS50297">
    <property type="entry name" value="ANK_REP_REGION"/>
    <property type="match status" value="1"/>
</dbReference>
<dbReference type="PROSITE" id="PS50088">
    <property type="entry name" value="ANK_REPEAT"/>
    <property type="match status" value="3"/>
</dbReference>
<feature type="transit peptide" description="Chloroplast" evidence="1">
    <location>
        <begin position="1"/>
        <end position="39"/>
    </location>
</feature>
<feature type="chain" id="PRO_0000313815" description="Ankyrin repeat domain-containing protein EMB506, chloroplastic">
    <location>
        <begin position="40"/>
        <end position="315"/>
    </location>
</feature>
<feature type="repeat" description="ANK 1">
    <location>
        <begin position="151"/>
        <end position="180"/>
    </location>
</feature>
<feature type="repeat" description="ANK 2">
    <location>
        <begin position="184"/>
        <end position="213"/>
    </location>
</feature>
<feature type="repeat" description="ANK 3">
    <location>
        <begin position="217"/>
        <end position="246"/>
    </location>
</feature>
<feature type="repeat" description="ANK 4">
    <location>
        <begin position="250"/>
        <end position="279"/>
    </location>
</feature>
<feature type="repeat" description="ANK 5">
    <location>
        <begin position="283"/>
        <end position="307"/>
    </location>
</feature>
<feature type="region of interest" description="Disordered" evidence="2">
    <location>
        <begin position="44"/>
        <end position="106"/>
    </location>
</feature>
<feature type="compositionally biased region" description="Polar residues" evidence="2">
    <location>
        <begin position="44"/>
        <end position="65"/>
    </location>
</feature>
<feature type="compositionally biased region" description="Acidic residues" evidence="2">
    <location>
        <begin position="72"/>
        <end position="104"/>
    </location>
</feature>
<feature type="helix" evidence="6">
    <location>
        <begin position="116"/>
        <end position="126"/>
    </location>
</feature>
<feature type="helix" evidence="6">
    <location>
        <begin position="131"/>
        <end position="139"/>
    </location>
</feature>
<feature type="turn" evidence="6">
    <location>
        <begin position="145"/>
        <end position="147"/>
    </location>
</feature>
<feature type="helix" evidence="6">
    <location>
        <begin position="155"/>
        <end position="161"/>
    </location>
</feature>
<feature type="helix" evidence="6">
    <location>
        <begin position="165"/>
        <end position="173"/>
    </location>
</feature>
<feature type="helix" evidence="6">
    <location>
        <begin position="188"/>
        <end position="194"/>
    </location>
</feature>
<feature type="helix" evidence="6">
    <location>
        <begin position="198"/>
        <end position="206"/>
    </location>
</feature>
<feature type="helix" evidence="6">
    <location>
        <begin position="221"/>
        <end position="227"/>
    </location>
</feature>
<feature type="helix" evidence="6">
    <location>
        <begin position="231"/>
        <end position="239"/>
    </location>
</feature>
<feature type="helix" evidence="6">
    <location>
        <begin position="254"/>
        <end position="260"/>
    </location>
</feature>
<feature type="helix" evidence="6">
    <location>
        <begin position="264"/>
        <end position="272"/>
    </location>
</feature>
<feature type="helix" evidence="6">
    <location>
        <begin position="287"/>
        <end position="292"/>
    </location>
</feature>
<feature type="helix" evidence="6">
    <location>
        <begin position="300"/>
        <end position="309"/>
    </location>
</feature>
<accession>Q9SQK3</accession>
<evidence type="ECO:0000255" key="1"/>
<evidence type="ECO:0000256" key="2">
    <source>
        <dbReference type="SAM" id="MobiDB-lite"/>
    </source>
</evidence>
<evidence type="ECO:0000269" key="3">
    <source>
    </source>
</evidence>
<evidence type="ECO:0000269" key="4">
    <source>
    </source>
</evidence>
<evidence type="ECO:0000269" key="5">
    <source>
    </source>
</evidence>
<evidence type="ECO:0007829" key="6">
    <source>
        <dbReference type="PDB" id="6JD6"/>
    </source>
</evidence>
<comment type="function">
    <text evidence="3 4">Involved in the initial differentiation of the proplastid during the embryo development. Also required for correct cotyledon, true leaf and cauline leaf margin development.</text>
</comment>
<comment type="subunit">
    <text evidence="5">Interacts with AKR. No homodimerization observed.</text>
</comment>
<comment type="interaction">
    <interactant intactId="EBI-2114010">
        <id>Q9SQK3</id>
    </interactant>
    <interactant intactId="EBI-2114020">
        <id>Q05753</id>
        <label>AKRP</label>
    </interactant>
    <organismsDiffer>false</organismsDiffer>
    <experiments>3</experiments>
</comment>
<comment type="subcellular location">
    <subcellularLocation>
        <location evidence="3 5">Plastid</location>
        <location evidence="3 5">Chloroplast</location>
    </subcellularLocation>
</comment>
<comment type="tissue specificity">
    <text evidence="3 5">Expressed in roots, inflorescence stems, flowers, siliques, dry seeds and mature cauline leaves.</text>
</comment>
<comment type="developmental stage">
    <text evidence="3">Expressed during embryo development and after the bolting stage, in mature culine leaves and in flowers. Not detected at the protein level at the rosette stage of development.</text>
</comment>
<sequence>MVSSVLSIPPQTCLLPRLPISDSVNCKSKIVYCLSTSVRGSSVKRQSTARTRSFTETNRRTPSVQSKHEFWEDPDDGSDSENEYEGEEEDGIGNDLDNESDWEDDSRVQKLTTTDNYEEELAKEVEQLLEPEERVILQQNEKPNLKMISTKSWKPLQTLALSMQIQLMDNLIENGLDIDDVDKDNQTALHKAIIGKKEAVISHLLRKGANPHLQDRDGAAPIHYAVQVGALQTVKLLFKYNVDVNVADNEGWTPLHIAVQSRNRDITKILLTNGADKTRRTKDGKLALDLALCFGRDFKSYDLVKLLKIMPTGDI</sequence>
<protein>
    <recommendedName>
        <fullName>Ankyrin repeat domain-containing protein EMB506, chloroplastic</fullName>
    </recommendedName>
    <alternativeName>
        <fullName>Protein EMBRYO DEFECTIVE 506</fullName>
    </alternativeName>
</protein>